<feature type="chain" id="PRO_0000085585" description="Putative multicopper oxidase GMC1">
    <location>
        <begin position="1"/>
        <end position="608"/>
    </location>
</feature>
<feature type="domain" description="Plastocyanin-like 1">
    <location>
        <begin position="51"/>
        <end position="163"/>
    </location>
</feature>
<feature type="domain" description="Plastocyanin-like 2">
    <location>
        <begin position="243"/>
        <end position="374"/>
    </location>
</feature>
<feature type="domain" description="Plastocyanin-like 3">
    <location>
        <begin position="421"/>
        <end position="548"/>
    </location>
</feature>
<feature type="binding site" description="type 2 copper site" evidence="1">
    <location>
        <position position="100"/>
    </location>
    <ligand>
        <name>Cu cation</name>
        <dbReference type="ChEBI" id="CHEBI:23378"/>
        <label>1</label>
    </ligand>
</feature>
<feature type="binding site" description="type 3 copper site" evidence="1">
    <location>
        <position position="102"/>
    </location>
    <ligand>
        <name>Cu cation</name>
        <dbReference type="ChEBI" id="CHEBI:23378"/>
        <label>2</label>
    </ligand>
</feature>
<feature type="binding site" description="type 3 copper site" evidence="1">
    <location>
        <position position="145"/>
    </location>
    <ligand>
        <name>Cu cation</name>
        <dbReference type="ChEBI" id="CHEBI:23378"/>
        <label>2</label>
    </ligand>
</feature>
<feature type="binding site" description="type 3 copper site" evidence="1">
    <location>
        <position position="147"/>
    </location>
    <ligand>
        <name>Cu cation</name>
        <dbReference type="ChEBI" id="CHEBI:23378"/>
        <label>3</label>
    </ligand>
</feature>
<feature type="binding site" description="type 1 copper site" evidence="1">
    <location>
        <position position="452"/>
    </location>
    <ligand>
        <name>Cu cation</name>
        <dbReference type="ChEBI" id="CHEBI:23378"/>
        <label>4</label>
    </ligand>
</feature>
<feature type="binding site" description="type 2 copper site" evidence="1">
    <location>
        <position position="455"/>
    </location>
    <ligand>
        <name>Cu cation</name>
        <dbReference type="ChEBI" id="CHEBI:23378"/>
        <label>1</label>
    </ligand>
</feature>
<feature type="binding site" description="type 3 copper site" evidence="1">
    <location>
        <position position="457"/>
    </location>
    <ligand>
        <name>Cu cation</name>
        <dbReference type="ChEBI" id="CHEBI:23378"/>
        <label>3</label>
    </ligand>
</feature>
<feature type="binding site" description="type 3 copper site" evidence="1">
    <location>
        <position position="530"/>
    </location>
    <ligand>
        <name>Cu cation</name>
        <dbReference type="ChEBI" id="CHEBI:23378"/>
        <label>3</label>
    </ligand>
</feature>
<feature type="binding site" description="type 1 copper site" evidence="1">
    <location>
        <position position="531"/>
    </location>
    <ligand>
        <name>Cu cation</name>
        <dbReference type="ChEBI" id="CHEBI:23378"/>
        <label>4</label>
    </ligand>
</feature>
<feature type="binding site" description="type 3 copper site" evidence="1">
    <location>
        <position position="532"/>
    </location>
    <ligand>
        <name>Cu cation</name>
        <dbReference type="ChEBI" id="CHEBI:23378"/>
        <label>2</label>
    </ligand>
</feature>
<feature type="binding site" description="type 1 copper site" evidence="1">
    <location>
        <position position="536"/>
    </location>
    <ligand>
        <name>Cu cation</name>
        <dbReference type="ChEBI" id="CHEBI:23378"/>
        <label>4</label>
    </ligand>
</feature>
<organism>
    <name type="scientific">Saccharomyces cerevisiae (strain ATCC 204508 / S288c)</name>
    <name type="common">Baker's yeast</name>
    <dbReference type="NCBI Taxonomy" id="559292"/>
    <lineage>
        <taxon>Eukaryota</taxon>
        <taxon>Fungi</taxon>
        <taxon>Dikarya</taxon>
        <taxon>Ascomycota</taxon>
        <taxon>Saccharomycotina</taxon>
        <taxon>Saccharomycetes</taxon>
        <taxon>Saccharomycetales</taxon>
        <taxon>Saccharomycetaceae</taxon>
        <taxon>Saccharomyces</taxon>
    </lineage>
</organism>
<reference key="1">
    <citation type="journal article" date="1997" name="Nature">
        <title>The nucleotide sequence of Saccharomyces cerevisiae chromosome IV.</title>
        <authorList>
            <person name="Jacq C."/>
            <person name="Alt-Moerbe J."/>
            <person name="Andre B."/>
            <person name="Arnold W."/>
            <person name="Bahr A."/>
            <person name="Ballesta J.P.G."/>
            <person name="Bargues M."/>
            <person name="Baron L."/>
            <person name="Becker A."/>
            <person name="Biteau N."/>
            <person name="Bloecker H."/>
            <person name="Blugeon C."/>
            <person name="Boskovic J."/>
            <person name="Brandt P."/>
            <person name="Brueckner M."/>
            <person name="Buitrago M.J."/>
            <person name="Coster F."/>
            <person name="Delaveau T."/>
            <person name="del Rey F."/>
            <person name="Dujon B."/>
            <person name="Eide L.G."/>
            <person name="Garcia-Cantalejo J.M."/>
            <person name="Goffeau A."/>
            <person name="Gomez-Peris A."/>
            <person name="Granotier C."/>
            <person name="Hanemann V."/>
            <person name="Hankeln T."/>
            <person name="Hoheisel J.D."/>
            <person name="Jaeger W."/>
            <person name="Jimenez A."/>
            <person name="Jonniaux J.-L."/>
            <person name="Kraemer C."/>
            <person name="Kuester H."/>
            <person name="Laamanen P."/>
            <person name="Legros Y."/>
            <person name="Louis E.J."/>
            <person name="Moeller-Rieker S."/>
            <person name="Monnet A."/>
            <person name="Moro M."/>
            <person name="Mueller-Auer S."/>
            <person name="Nussbaumer B."/>
            <person name="Paricio N."/>
            <person name="Paulin L."/>
            <person name="Perea J."/>
            <person name="Perez-Alonso M."/>
            <person name="Perez-Ortin J.E."/>
            <person name="Pohl T.M."/>
            <person name="Prydz H."/>
            <person name="Purnelle B."/>
            <person name="Rasmussen S.W."/>
            <person name="Remacha M.A."/>
            <person name="Revuelta J.L."/>
            <person name="Rieger M."/>
            <person name="Salom D."/>
            <person name="Saluz H.P."/>
            <person name="Saiz J.E."/>
            <person name="Saren A.-M."/>
            <person name="Schaefer M."/>
            <person name="Scharfe M."/>
            <person name="Schmidt E.R."/>
            <person name="Schneider C."/>
            <person name="Scholler P."/>
            <person name="Schwarz S."/>
            <person name="Soler-Mira A."/>
            <person name="Urrestarazu L.A."/>
            <person name="Verhasselt P."/>
            <person name="Vissers S."/>
            <person name="Voet M."/>
            <person name="Volckaert G."/>
            <person name="Wagner G."/>
            <person name="Wambutt R."/>
            <person name="Wedler E."/>
            <person name="Wedler H."/>
            <person name="Woelfl S."/>
            <person name="Harris D.E."/>
            <person name="Bowman S."/>
            <person name="Brown D."/>
            <person name="Churcher C.M."/>
            <person name="Connor R."/>
            <person name="Dedman K."/>
            <person name="Gentles S."/>
            <person name="Hamlin N."/>
            <person name="Hunt S."/>
            <person name="Jones L."/>
            <person name="McDonald S."/>
            <person name="Murphy L.D."/>
            <person name="Niblett D."/>
            <person name="Odell C."/>
            <person name="Oliver K."/>
            <person name="Rajandream M.A."/>
            <person name="Richards C."/>
            <person name="Shore L."/>
            <person name="Walsh S.V."/>
            <person name="Barrell B.G."/>
            <person name="Dietrich F.S."/>
            <person name="Mulligan J.T."/>
            <person name="Allen E."/>
            <person name="Araujo R."/>
            <person name="Aviles E."/>
            <person name="Berno A."/>
            <person name="Carpenter J."/>
            <person name="Chen E."/>
            <person name="Cherry J.M."/>
            <person name="Chung E."/>
            <person name="Duncan M."/>
            <person name="Hunicke-Smith S."/>
            <person name="Hyman R.W."/>
            <person name="Komp C."/>
            <person name="Lashkari D."/>
            <person name="Lew H."/>
            <person name="Lin D."/>
            <person name="Mosedale D."/>
            <person name="Nakahara K."/>
            <person name="Namath A."/>
            <person name="Oefner P."/>
            <person name="Oh C."/>
            <person name="Petel F.X."/>
            <person name="Roberts D."/>
            <person name="Schramm S."/>
            <person name="Schroeder M."/>
            <person name="Shogren T."/>
            <person name="Shroff N."/>
            <person name="Winant A."/>
            <person name="Yelton M.A."/>
            <person name="Botstein D."/>
            <person name="Davis R.W."/>
            <person name="Johnston M."/>
            <person name="Andrews S."/>
            <person name="Brinkman R."/>
            <person name="Cooper J."/>
            <person name="Ding H."/>
            <person name="Du Z."/>
            <person name="Favello A."/>
            <person name="Fulton L."/>
            <person name="Gattung S."/>
            <person name="Greco T."/>
            <person name="Hallsworth K."/>
            <person name="Hawkins J."/>
            <person name="Hillier L.W."/>
            <person name="Jier M."/>
            <person name="Johnson D."/>
            <person name="Johnston L."/>
            <person name="Kirsten J."/>
            <person name="Kucaba T."/>
            <person name="Langston Y."/>
            <person name="Latreille P."/>
            <person name="Le T."/>
            <person name="Mardis E."/>
            <person name="Menezes S."/>
            <person name="Miller N."/>
            <person name="Nhan M."/>
            <person name="Pauley A."/>
            <person name="Peluso D."/>
            <person name="Rifkin L."/>
            <person name="Riles L."/>
            <person name="Taich A."/>
            <person name="Trevaskis E."/>
            <person name="Vignati D."/>
            <person name="Wilcox L."/>
            <person name="Wohldman P."/>
            <person name="Vaudin M."/>
            <person name="Wilson R."/>
            <person name="Waterston R."/>
            <person name="Albermann K."/>
            <person name="Hani J."/>
            <person name="Heumann K."/>
            <person name="Kleine K."/>
            <person name="Mewes H.-W."/>
            <person name="Zollner A."/>
            <person name="Zaccaria P."/>
        </authorList>
    </citation>
    <scope>NUCLEOTIDE SEQUENCE [LARGE SCALE GENOMIC DNA]</scope>
    <source>
        <strain>ATCC 204508 / S288c</strain>
    </source>
</reference>
<reference key="2">
    <citation type="journal article" date="2014" name="G3 (Bethesda)">
        <title>The reference genome sequence of Saccharomyces cerevisiae: Then and now.</title>
        <authorList>
            <person name="Engel S.R."/>
            <person name="Dietrich F.S."/>
            <person name="Fisk D.G."/>
            <person name="Binkley G."/>
            <person name="Balakrishnan R."/>
            <person name="Costanzo M.C."/>
            <person name="Dwight S.S."/>
            <person name="Hitz B.C."/>
            <person name="Karra K."/>
            <person name="Nash R.S."/>
            <person name="Weng S."/>
            <person name="Wong E.D."/>
            <person name="Lloyd P."/>
            <person name="Skrzypek M.S."/>
            <person name="Miyasato S.R."/>
            <person name="Simison M."/>
            <person name="Cherry J.M."/>
        </authorList>
    </citation>
    <scope>GENOME REANNOTATION</scope>
    <source>
        <strain>ATCC 204508 / S288c</strain>
    </source>
</reference>
<reference key="3">
    <citation type="journal article" date="2003" name="Nature">
        <title>Global analysis of protein expression in yeast.</title>
        <authorList>
            <person name="Ghaemmaghami S."/>
            <person name="Huh W.-K."/>
            <person name="Bower K."/>
            <person name="Howson R.W."/>
            <person name="Belle A."/>
            <person name="Dephoure N."/>
            <person name="O'Shea E.K."/>
            <person name="Weissman J.S."/>
        </authorList>
    </citation>
    <scope>LEVEL OF PROTEIN EXPRESSION [LARGE SCALE ANALYSIS]</scope>
</reference>
<reference key="4">
    <citation type="journal article" date="2012" name="Science">
        <title>High-resolution view of the yeast meiotic program revealed by ribosome profiling.</title>
        <authorList>
            <person name="Brar G.A."/>
            <person name="Yassour M."/>
            <person name="Friedman N."/>
            <person name="Regev A."/>
            <person name="Ingolia N.T."/>
            <person name="Weissman J.S."/>
        </authorList>
    </citation>
    <scope>FUNCTION</scope>
</reference>
<accession>Q04399</accession>
<accession>D6VTC8</accession>
<keyword id="KW-0186">Copper</keyword>
<keyword id="KW-0406">Ion transport</keyword>
<keyword id="KW-0408">Iron</keyword>
<keyword id="KW-0410">Iron transport</keyword>
<keyword id="KW-0469">Meiosis</keyword>
<keyword id="KW-0479">Metal-binding</keyword>
<keyword id="KW-0560">Oxidoreductase</keyword>
<keyword id="KW-1185">Reference proteome</keyword>
<keyword id="KW-0677">Repeat</keyword>
<keyword id="KW-0813">Transport</keyword>
<comment type="function">
    <text evidence="1 3">Could be an iron transport multicopper oxidase, which is required for Fe(2+) high affinity uptake. May be required to oxidize Fe(2+) and release it from the transporter. Essential component of copper-dependent iron transport (By similarity). Involved in meiotic prophase and synaptonemal complex (SC) assembly.</text>
</comment>
<comment type="cofactor">
    <cofactor evidence="1">
        <name>Cu cation</name>
        <dbReference type="ChEBI" id="CHEBI:23378"/>
    </cofactor>
    <text evidence="1">Binds 4 Cu cations per monomer.</text>
</comment>
<comment type="miscellaneous">
    <text evidence="2">Present with 589 molecules/cell in log phase SD medium.</text>
</comment>
<comment type="similarity">
    <text evidence="4">Belongs to the multicopper oxidase family.</text>
</comment>
<dbReference type="EC" id="1.-.-.-"/>
<dbReference type="EMBL" id="U33057">
    <property type="protein sequence ID" value="AAB64948.1"/>
    <property type="molecule type" value="Genomic_DNA"/>
</dbReference>
<dbReference type="EMBL" id="BK006938">
    <property type="protein sequence ID" value="DAA12338.1"/>
    <property type="molecule type" value="Genomic_DNA"/>
</dbReference>
<dbReference type="PIR" id="S69564">
    <property type="entry name" value="S69564"/>
</dbReference>
<dbReference type="RefSeq" id="NP_010794.3">
    <property type="nucleotide sequence ID" value="NM_001180814.3"/>
</dbReference>
<dbReference type="SMR" id="Q04399"/>
<dbReference type="BioGRID" id="32557">
    <property type="interactions" value="54"/>
</dbReference>
<dbReference type="DIP" id="DIP-5270N"/>
<dbReference type="FunCoup" id="Q04399">
    <property type="interactions" value="37"/>
</dbReference>
<dbReference type="IntAct" id="Q04399">
    <property type="interactions" value="3"/>
</dbReference>
<dbReference type="MINT" id="Q04399"/>
<dbReference type="STRING" id="4932.YDR506C"/>
<dbReference type="PaxDb" id="4932-YDR506C"/>
<dbReference type="PeptideAtlas" id="Q04399"/>
<dbReference type="EnsemblFungi" id="YDR506C_mRNA">
    <property type="protein sequence ID" value="YDR506C"/>
    <property type="gene ID" value="YDR506C"/>
</dbReference>
<dbReference type="GeneID" id="852117"/>
<dbReference type="KEGG" id="sce:YDR506C"/>
<dbReference type="AGR" id="SGD:S000002914"/>
<dbReference type="SGD" id="S000002914">
    <property type="gene designation" value="GMC1"/>
</dbReference>
<dbReference type="VEuPathDB" id="FungiDB:YDR506C"/>
<dbReference type="eggNOG" id="KOG1263">
    <property type="taxonomic scope" value="Eukaryota"/>
</dbReference>
<dbReference type="GeneTree" id="ENSGT00940000176768"/>
<dbReference type="HOGENOM" id="CLU_440088_0_0_1"/>
<dbReference type="InParanoid" id="Q04399"/>
<dbReference type="OMA" id="MRHPWHL"/>
<dbReference type="OrthoDB" id="2121828at2759"/>
<dbReference type="BioCyc" id="YEAST:G3O-30027-MONOMER"/>
<dbReference type="BioGRID-ORCS" id="852117">
    <property type="hits" value="1 hit in 10 CRISPR screens"/>
</dbReference>
<dbReference type="PRO" id="PR:Q04399"/>
<dbReference type="Proteomes" id="UP000002311">
    <property type="component" value="Chromosome IV"/>
</dbReference>
<dbReference type="RNAct" id="Q04399">
    <property type="molecule type" value="protein"/>
</dbReference>
<dbReference type="GO" id="GO:0000329">
    <property type="term" value="C:fungal-type vacuole membrane"/>
    <property type="evidence" value="ECO:0000318"/>
    <property type="project" value="GO_Central"/>
</dbReference>
<dbReference type="GO" id="GO:0005507">
    <property type="term" value="F:copper ion binding"/>
    <property type="evidence" value="ECO:0007669"/>
    <property type="project" value="InterPro"/>
</dbReference>
<dbReference type="GO" id="GO:0004322">
    <property type="term" value="F:ferroxidase activity"/>
    <property type="evidence" value="ECO:0000318"/>
    <property type="project" value="GO_Central"/>
</dbReference>
<dbReference type="GO" id="GO:0010106">
    <property type="term" value="P:cellular response to iron ion starvation"/>
    <property type="evidence" value="ECO:0000318"/>
    <property type="project" value="GO_Central"/>
</dbReference>
<dbReference type="GO" id="GO:0051321">
    <property type="term" value="P:meiotic cell cycle"/>
    <property type="evidence" value="ECO:0000315"/>
    <property type="project" value="SGD"/>
</dbReference>
<dbReference type="GO" id="GO:0033215">
    <property type="term" value="P:reductive iron assimilation"/>
    <property type="evidence" value="ECO:0000318"/>
    <property type="project" value="GO_Central"/>
</dbReference>
<dbReference type="GO" id="GO:0070193">
    <property type="term" value="P:synaptonemal complex organization"/>
    <property type="evidence" value="ECO:0000315"/>
    <property type="project" value="SGD"/>
</dbReference>
<dbReference type="CDD" id="cd13864">
    <property type="entry name" value="CuRO_1_MCO_like_2"/>
    <property type="match status" value="1"/>
</dbReference>
<dbReference type="CDD" id="cd13877">
    <property type="entry name" value="CuRO_2_Fet3p_like"/>
    <property type="match status" value="1"/>
</dbReference>
<dbReference type="Gene3D" id="2.60.40.420">
    <property type="entry name" value="Cupredoxins - blue copper proteins"/>
    <property type="match status" value="3"/>
</dbReference>
<dbReference type="InterPro" id="IPR011707">
    <property type="entry name" value="Cu-oxidase-like_N"/>
</dbReference>
<dbReference type="InterPro" id="IPR001117">
    <property type="entry name" value="Cu-oxidase_2nd"/>
</dbReference>
<dbReference type="InterPro" id="IPR011706">
    <property type="entry name" value="Cu-oxidase_C"/>
</dbReference>
<dbReference type="InterPro" id="IPR045087">
    <property type="entry name" value="Cu-oxidase_fam"/>
</dbReference>
<dbReference type="InterPro" id="IPR033138">
    <property type="entry name" value="Cu_oxidase_CS"/>
</dbReference>
<dbReference type="InterPro" id="IPR002355">
    <property type="entry name" value="Cu_oxidase_Cu_BS"/>
</dbReference>
<dbReference type="InterPro" id="IPR008972">
    <property type="entry name" value="Cupredoxin"/>
</dbReference>
<dbReference type="InterPro" id="IPR044130">
    <property type="entry name" value="CuRO_2_Fet3-like"/>
</dbReference>
<dbReference type="PANTHER" id="PTHR11709:SF434">
    <property type="entry name" value="IRON TRANSPORT MULTICOPPER OXIDASE FET5-RELATED"/>
    <property type="match status" value="1"/>
</dbReference>
<dbReference type="PANTHER" id="PTHR11709">
    <property type="entry name" value="MULTI-COPPER OXIDASE"/>
    <property type="match status" value="1"/>
</dbReference>
<dbReference type="Pfam" id="PF00394">
    <property type="entry name" value="Cu-oxidase"/>
    <property type="match status" value="1"/>
</dbReference>
<dbReference type="Pfam" id="PF07731">
    <property type="entry name" value="Cu-oxidase_2"/>
    <property type="match status" value="1"/>
</dbReference>
<dbReference type="Pfam" id="PF07732">
    <property type="entry name" value="Cu-oxidase_3"/>
    <property type="match status" value="1"/>
</dbReference>
<dbReference type="SUPFAM" id="SSF49503">
    <property type="entry name" value="Cupredoxins"/>
    <property type="match status" value="3"/>
</dbReference>
<dbReference type="PROSITE" id="PS00079">
    <property type="entry name" value="MULTICOPPER_OXIDASE1"/>
    <property type="match status" value="2"/>
</dbReference>
<dbReference type="PROSITE" id="PS00080">
    <property type="entry name" value="MULTICOPPER_OXIDASE2"/>
    <property type="match status" value="1"/>
</dbReference>
<sequence length="608" mass="69281">MKVILLKPVQLPMLLLILLKFIMAAKEGKIHVLEFNASSEYTLDKRRVISINGYSATFGPEIRVKSGDTLNLKLTNWICSEEEASKDSDVWKDYCSTALHFHGVVPLANEFDGIPGLTQPTIGYGESYWYNFTIDQSTCGTFWYHSHSSVQYGDGMRGVLIVECDDYDNHVANTINSVRDIETLDDGVVTMKKDKHTKELTDYEVQERIITLSDWYTNWNLDILNDKVLSSTGGTDPKFDGSLINGKSSDGETIKIGFNTEYLLLRIVNSGMSGTQVFHLDGFQLIVLEADGIMIKPFIVQTINLAVGQRYTILVKLKSDTSFIRMINGCNKMMGYITKQWWFYKEGAHLDLPKNPNDVSIEHLPGFTKAELYRDIEPTQEENKKLRTKADPVAVFEFDYAYYKDESTKQKYGTGMYKVNERTFSEYVKDPVRFGFNETYDIVINSLDHMRHPWHMHGHHFQIISLGNKGDGPFHKDVQEGKAWSRYQNDLRHLARTGKAPMVRDSINIAGNSYAVLRINTEMPGKWLLHCHVEWHMMKGLGIVFEVPTTTEDSTKQATTAVLSYPTKEPDPNTVVHTAALEQNKSKVIAVYILIMCAVDAIFYWLLM</sequence>
<proteinExistence type="evidence at protein level"/>
<name>GMC1_YEAST</name>
<gene>
    <name type="primary">GMC1</name>
    <name type="ordered locus">YDR506C</name>
    <name type="ORF">D9719.12</name>
</gene>
<evidence type="ECO:0000250" key="1"/>
<evidence type="ECO:0000269" key="2">
    <source>
    </source>
</evidence>
<evidence type="ECO:0000269" key="3">
    <source>
    </source>
</evidence>
<evidence type="ECO:0000305" key="4"/>
<protein>
    <recommendedName>
        <fullName>Putative multicopper oxidase GMC1</fullName>
        <ecNumber>1.-.-.-</ecNumber>
    </recommendedName>
    <alternativeName>
        <fullName>Grand meiotic recombination cluster protein 1</fullName>
    </alternativeName>
</protein>